<evidence type="ECO:0000250" key="1">
    <source>
        <dbReference type="UniProtKB" id="J9VVN9"/>
    </source>
</evidence>
<evidence type="ECO:0000250" key="2">
    <source>
        <dbReference type="UniProtKB" id="Q08831"/>
    </source>
</evidence>
<evidence type="ECO:0000255" key="3">
    <source>
        <dbReference type="PROSITE-ProRule" id="PRU00184"/>
    </source>
</evidence>
<evidence type="ECO:0000256" key="4">
    <source>
        <dbReference type="SAM" id="MobiDB-lite"/>
    </source>
</evidence>
<evidence type="ECO:0000305" key="5"/>
<comment type="function">
    <text evidence="2">RNA-binding protein involved in post-transcriptional regulation through transcript degradation.</text>
</comment>
<comment type="subunit">
    <text evidence="2">Monomer. Binds to RNA.</text>
</comment>
<comment type="subcellular location">
    <subcellularLocation>
        <location evidence="2">Cytoplasm</location>
        <location evidence="2">Cytosol</location>
    </subcellularLocation>
    <subcellularLocation>
        <location evidence="1">Cytoplasm</location>
        <location evidence="1">P-body</location>
    </subcellularLocation>
</comment>
<comment type="similarity">
    <text evidence="5">Belongs to the VTS1 family.</text>
</comment>
<reference key="1">
    <citation type="journal article" date="2006" name="Nature">
        <title>Insights from the genome of the biotrophic fungal plant pathogen Ustilago maydis.</title>
        <authorList>
            <person name="Kaemper J."/>
            <person name="Kahmann R."/>
            <person name="Boelker M."/>
            <person name="Ma L.-J."/>
            <person name="Brefort T."/>
            <person name="Saville B.J."/>
            <person name="Banuett F."/>
            <person name="Kronstad J.W."/>
            <person name="Gold S.E."/>
            <person name="Mueller O."/>
            <person name="Perlin M.H."/>
            <person name="Woesten H.A.B."/>
            <person name="de Vries R."/>
            <person name="Ruiz-Herrera J."/>
            <person name="Reynaga-Pena C.G."/>
            <person name="Snetselaar K."/>
            <person name="McCann M."/>
            <person name="Perez-Martin J."/>
            <person name="Feldbruegge M."/>
            <person name="Basse C.W."/>
            <person name="Steinberg G."/>
            <person name="Ibeas J.I."/>
            <person name="Holloman W."/>
            <person name="Guzman P."/>
            <person name="Farman M.L."/>
            <person name="Stajich J.E."/>
            <person name="Sentandreu R."/>
            <person name="Gonzalez-Prieto J.M."/>
            <person name="Kennell J.C."/>
            <person name="Molina L."/>
            <person name="Schirawski J."/>
            <person name="Mendoza-Mendoza A."/>
            <person name="Greilinger D."/>
            <person name="Muench K."/>
            <person name="Roessel N."/>
            <person name="Scherer M."/>
            <person name="Vranes M."/>
            <person name="Ladendorf O."/>
            <person name="Vincon V."/>
            <person name="Fuchs U."/>
            <person name="Sandrock B."/>
            <person name="Meng S."/>
            <person name="Ho E.C.H."/>
            <person name="Cahill M.J."/>
            <person name="Boyce K.J."/>
            <person name="Klose J."/>
            <person name="Klosterman S.J."/>
            <person name="Deelstra H.J."/>
            <person name="Ortiz-Castellanos L."/>
            <person name="Li W."/>
            <person name="Sanchez-Alonso P."/>
            <person name="Schreier P.H."/>
            <person name="Haeuser-Hahn I."/>
            <person name="Vaupel M."/>
            <person name="Koopmann E."/>
            <person name="Friedrich G."/>
            <person name="Voss H."/>
            <person name="Schlueter T."/>
            <person name="Margolis J."/>
            <person name="Platt D."/>
            <person name="Swimmer C."/>
            <person name="Gnirke A."/>
            <person name="Chen F."/>
            <person name="Vysotskaia V."/>
            <person name="Mannhaupt G."/>
            <person name="Gueldener U."/>
            <person name="Muensterkoetter M."/>
            <person name="Haase D."/>
            <person name="Oesterheld M."/>
            <person name="Mewes H.-W."/>
            <person name="Mauceli E.W."/>
            <person name="DeCaprio D."/>
            <person name="Wade C.M."/>
            <person name="Butler J."/>
            <person name="Young S.K."/>
            <person name="Jaffe D.B."/>
            <person name="Calvo S.E."/>
            <person name="Nusbaum C."/>
            <person name="Galagan J.E."/>
            <person name="Birren B.W."/>
        </authorList>
    </citation>
    <scope>NUCLEOTIDE SEQUENCE [LARGE SCALE GENOMIC DNA]</scope>
    <source>
        <strain>DSM 14603 / FGSC 9021 / UM521</strain>
    </source>
</reference>
<reference key="2">
    <citation type="submission" date="2014-09" db="EMBL/GenBank/DDBJ databases">
        <authorList>
            <person name="Gueldener U."/>
            <person name="Muensterkoetter M."/>
            <person name="Walter M.C."/>
            <person name="Mannhaupt G."/>
            <person name="Kahmann R."/>
        </authorList>
    </citation>
    <scope>GENOME REANNOTATION</scope>
    <source>
        <strain>DSM 14603 / FGSC 9021 / UM521</strain>
    </source>
</reference>
<sequence>MSDFGLLRSPLTPSNASINRASSPSGHRPITMNPHSRYSLGKGASTEHMMRLAQHGNAGHDGALRSPSIGGNAPMPGSAGPRNLRPSSEMLPNMNHHGTPESEAIDRWFEDLQHYEATLEEMAAASLDQNFKEELSAIEQWFRVLSEAERTAALYSLLQESTQVQIRFFITVLQQMARSDPVSALLSPSHHNSTMADQMEAKLASLGLKSPSALKSPASPGNRGYRQSSDAAGFLSPNVAAMYSPGNTDAASTLAAQRAKLKANRTSAPGTLIGESRNYSGGQLDQVQERGGSPNLQQQRTLSGDHSRPKSTDFSNNNVGRSPRASGPLDDQLSPISATGNWSSMVNTPLVPMFTDNDKAGTGEANVNLDTAAAQLASLQQQQQVGGNGRVMVDPDVPRFRRKSNQNIGGGGSSYGQGPNLYDHTSPGVSPNIGVPSGWGQSDNFGRGGLNTGLSAFGGNNDSNSNQFNIPPMSPNALAGLQSPSGGLANPLNMQVMNMMAAMGGLNLNNMNGAQLLAMQQQLLQNQQALSMLAQQQQLQQQQPHGRNLGNFGGGGLSPGLAGQAGRKSPRSGTSPSVRAAALPGAAGGAGSGGAGASNAAGGEEEVADLSTLEDVPAWLRQLRLHKYTPNFETSHWKEMVMMGDKQLEDKGVAALGARRKMLKTFELVRKKYGIRMDGEDRPGSGVPDGNNDKAADVDDAGDSNEAQEVDRELGGAATAASAPVAKD</sequence>
<name>VTS1_MYCMD</name>
<accession>Q4P965</accession>
<accession>A0A0D1C519</accession>
<feature type="chain" id="PRO_0000081456" description="RNA-binding protein VTS1">
    <location>
        <begin position="1"/>
        <end position="728"/>
    </location>
</feature>
<feature type="domain" description="SAM" evidence="3">
    <location>
        <begin position="611"/>
        <end position="672"/>
    </location>
</feature>
<feature type="region of interest" description="Disordered" evidence="4">
    <location>
        <begin position="1"/>
        <end position="41"/>
    </location>
</feature>
<feature type="region of interest" description="Disordered" evidence="4">
    <location>
        <begin position="57"/>
        <end position="101"/>
    </location>
</feature>
<feature type="region of interest" description="Disordered" evidence="4">
    <location>
        <begin position="210"/>
        <end position="230"/>
    </location>
</feature>
<feature type="region of interest" description="Disordered" evidence="4">
    <location>
        <begin position="261"/>
        <end position="344"/>
    </location>
</feature>
<feature type="region of interest" description="Disordered" evidence="4">
    <location>
        <begin position="456"/>
        <end position="482"/>
    </location>
</feature>
<feature type="region of interest" description="Disordered" evidence="4">
    <location>
        <begin position="536"/>
        <end position="608"/>
    </location>
</feature>
<feature type="region of interest" description="Disordered" evidence="4">
    <location>
        <begin position="677"/>
        <end position="728"/>
    </location>
</feature>
<feature type="compositionally biased region" description="Polar residues" evidence="4">
    <location>
        <begin position="11"/>
        <end position="25"/>
    </location>
</feature>
<feature type="compositionally biased region" description="Low complexity" evidence="4">
    <location>
        <begin position="210"/>
        <end position="220"/>
    </location>
</feature>
<feature type="compositionally biased region" description="Polar residues" evidence="4">
    <location>
        <begin position="277"/>
        <end position="286"/>
    </location>
</feature>
<feature type="compositionally biased region" description="Polar residues" evidence="4">
    <location>
        <begin position="334"/>
        <end position="344"/>
    </location>
</feature>
<feature type="compositionally biased region" description="Polar residues" evidence="4">
    <location>
        <begin position="456"/>
        <end position="469"/>
    </location>
</feature>
<feature type="compositionally biased region" description="Low complexity" evidence="4">
    <location>
        <begin position="536"/>
        <end position="550"/>
    </location>
</feature>
<feature type="compositionally biased region" description="Gly residues" evidence="4">
    <location>
        <begin position="586"/>
        <end position="596"/>
    </location>
</feature>
<feature type="compositionally biased region" description="Acidic residues" evidence="4">
    <location>
        <begin position="698"/>
        <end position="708"/>
    </location>
</feature>
<feature type="compositionally biased region" description="Low complexity" evidence="4">
    <location>
        <begin position="717"/>
        <end position="728"/>
    </location>
</feature>
<keyword id="KW-0963">Cytoplasm</keyword>
<keyword id="KW-0547">Nucleotide-binding</keyword>
<keyword id="KW-0653">Protein transport</keyword>
<keyword id="KW-1185">Reference proteome</keyword>
<keyword id="KW-0694">RNA-binding</keyword>
<keyword id="KW-0813">Transport</keyword>
<gene>
    <name type="primary">VTS1</name>
    <name type="ORF">UMAG_03348</name>
</gene>
<protein>
    <recommendedName>
        <fullName>RNA-binding protein VTS1</fullName>
    </recommendedName>
</protein>
<proteinExistence type="inferred from homology"/>
<organism>
    <name type="scientific">Mycosarcoma maydis</name>
    <name type="common">Corn smut fungus</name>
    <name type="synonym">Ustilago maydis</name>
    <dbReference type="NCBI Taxonomy" id="5270"/>
    <lineage>
        <taxon>Eukaryota</taxon>
        <taxon>Fungi</taxon>
        <taxon>Dikarya</taxon>
        <taxon>Basidiomycota</taxon>
        <taxon>Ustilaginomycotina</taxon>
        <taxon>Ustilaginomycetes</taxon>
        <taxon>Ustilaginales</taxon>
        <taxon>Ustilaginaceae</taxon>
        <taxon>Mycosarcoma</taxon>
    </lineage>
</organism>
<dbReference type="EMBL" id="CM003147">
    <property type="protein sequence ID" value="KIS68782.1"/>
    <property type="molecule type" value="Genomic_DNA"/>
</dbReference>
<dbReference type="RefSeq" id="XP_011389738.1">
    <property type="nucleotide sequence ID" value="XM_011391436.1"/>
</dbReference>
<dbReference type="SMR" id="Q4P965"/>
<dbReference type="STRING" id="237631.Q4P965"/>
<dbReference type="EnsemblFungi" id="KIS68782">
    <property type="protein sequence ID" value="KIS68782"/>
    <property type="gene ID" value="UMAG_03348"/>
</dbReference>
<dbReference type="GeneID" id="23563826"/>
<dbReference type="KEGG" id="uma:UMAG_03348"/>
<dbReference type="VEuPathDB" id="FungiDB:UMAG_03348"/>
<dbReference type="eggNOG" id="KOG3791">
    <property type="taxonomic scope" value="Eukaryota"/>
</dbReference>
<dbReference type="HOGENOM" id="CLU_017632_1_0_1"/>
<dbReference type="InParanoid" id="Q4P965"/>
<dbReference type="OMA" id="MSTVNNR"/>
<dbReference type="OrthoDB" id="2155283at2759"/>
<dbReference type="Proteomes" id="UP000000561">
    <property type="component" value="Chromosome 8"/>
</dbReference>
<dbReference type="GO" id="GO:0005829">
    <property type="term" value="C:cytosol"/>
    <property type="evidence" value="ECO:0007669"/>
    <property type="project" value="UniProtKB-SubCell"/>
</dbReference>
<dbReference type="GO" id="GO:0000932">
    <property type="term" value="C:P-body"/>
    <property type="evidence" value="ECO:0000318"/>
    <property type="project" value="GO_Central"/>
</dbReference>
<dbReference type="GO" id="GO:0003729">
    <property type="term" value="F:mRNA binding"/>
    <property type="evidence" value="ECO:0000318"/>
    <property type="project" value="GO_Central"/>
</dbReference>
<dbReference type="GO" id="GO:0000166">
    <property type="term" value="F:nucleotide binding"/>
    <property type="evidence" value="ECO:0007669"/>
    <property type="project" value="UniProtKB-KW"/>
</dbReference>
<dbReference type="GO" id="GO:0000289">
    <property type="term" value="P:nuclear-transcribed mRNA poly(A) tail shortening"/>
    <property type="evidence" value="ECO:0000318"/>
    <property type="project" value="GO_Central"/>
</dbReference>
<dbReference type="GO" id="GO:0015031">
    <property type="term" value="P:protein transport"/>
    <property type="evidence" value="ECO:0007669"/>
    <property type="project" value="UniProtKB-KW"/>
</dbReference>
<dbReference type="CDD" id="cd09556">
    <property type="entry name" value="SAM_VTS1_fungal"/>
    <property type="match status" value="1"/>
</dbReference>
<dbReference type="Gene3D" id="1.10.150.50">
    <property type="entry name" value="Transcription Factor, Ets-1"/>
    <property type="match status" value="1"/>
</dbReference>
<dbReference type="InterPro" id="IPR001660">
    <property type="entry name" value="SAM"/>
</dbReference>
<dbReference type="InterPro" id="IPR013761">
    <property type="entry name" value="SAM/pointed_sf"/>
</dbReference>
<dbReference type="InterPro" id="IPR050897">
    <property type="entry name" value="SMAUG/VTS1_RNA-bind"/>
</dbReference>
<dbReference type="InterPro" id="IPR037635">
    <property type="entry name" value="VTS1_SAM"/>
</dbReference>
<dbReference type="PANTHER" id="PTHR12515:SF5">
    <property type="entry name" value="PROTEIN SMAUG"/>
    <property type="match status" value="1"/>
</dbReference>
<dbReference type="PANTHER" id="PTHR12515">
    <property type="entry name" value="STERILE ALPHA MOTIF DOMAIN CONTAINING PROTEIN 4-RELATED"/>
    <property type="match status" value="1"/>
</dbReference>
<dbReference type="Pfam" id="PF07647">
    <property type="entry name" value="SAM_2"/>
    <property type="match status" value="1"/>
</dbReference>
<dbReference type="Pfam" id="PF25479">
    <property type="entry name" value="Vts1"/>
    <property type="match status" value="1"/>
</dbReference>
<dbReference type="SMART" id="SM00454">
    <property type="entry name" value="SAM"/>
    <property type="match status" value="1"/>
</dbReference>
<dbReference type="SUPFAM" id="SSF47769">
    <property type="entry name" value="SAM/Pointed domain"/>
    <property type="match status" value="1"/>
</dbReference>
<dbReference type="PROSITE" id="PS50105">
    <property type="entry name" value="SAM_DOMAIN"/>
    <property type="match status" value="1"/>
</dbReference>